<proteinExistence type="inferred from homology"/>
<feature type="chain" id="PRO_1000117637" description="Serine hydroxymethyltransferase">
    <location>
        <begin position="1"/>
        <end position="415"/>
    </location>
</feature>
<feature type="binding site" evidence="1">
    <location>
        <position position="117"/>
    </location>
    <ligand>
        <name>(6S)-5,6,7,8-tetrahydrofolate</name>
        <dbReference type="ChEBI" id="CHEBI:57453"/>
    </ligand>
</feature>
<feature type="binding site" evidence="1">
    <location>
        <begin position="121"/>
        <end position="123"/>
    </location>
    <ligand>
        <name>(6S)-5,6,7,8-tetrahydrofolate</name>
        <dbReference type="ChEBI" id="CHEBI:57453"/>
    </ligand>
</feature>
<feature type="binding site" evidence="1">
    <location>
        <position position="241"/>
    </location>
    <ligand>
        <name>(6S)-5,6,7,8-tetrahydrofolate</name>
        <dbReference type="ChEBI" id="CHEBI:57453"/>
    </ligand>
</feature>
<feature type="binding site" evidence="1">
    <location>
        <begin position="349"/>
        <end position="351"/>
    </location>
    <ligand>
        <name>(6S)-5,6,7,8-tetrahydrofolate</name>
        <dbReference type="ChEBI" id="CHEBI:57453"/>
    </ligand>
</feature>
<feature type="site" description="Plays an important role in substrate specificity" evidence="1">
    <location>
        <position position="225"/>
    </location>
</feature>
<feature type="modified residue" description="N6-(pyridoxal phosphate)lysine" evidence="1">
    <location>
        <position position="226"/>
    </location>
</feature>
<comment type="function">
    <text evidence="1">Catalyzes the reversible interconversion of serine and glycine with tetrahydrofolate (THF) serving as the one-carbon carrier. This reaction serves as the major source of one-carbon groups required for the biosynthesis of purines, thymidylate, methionine, and other important biomolecules. Also exhibits THF-independent aldolase activity toward beta-hydroxyamino acids, producing glycine and aldehydes, via a retro-aldol mechanism.</text>
</comment>
<comment type="catalytic activity">
    <reaction evidence="1">
        <text>(6R)-5,10-methylene-5,6,7,8-tetrahydrofolate + glycine + H2O = (6S)-5,6,7,8-tetrahydrofolate + L-serine</text>
        <dbReference type="Rhea" id="RHEA:15481"/>
        <dbReference type="ChEBI" id="CHEBI:15377"/>
        <dbReference type="ChEBI" id="CHEBI:15636"/>
        <dbReference type="ChEBI" id="CHEBI:33384"/>
        <dbReference type="ChEBI" id="CHEBI:57305"/>
        <dbReference type="ChEBI" id="CHEBI:57453"/>
        <dbReference type="EC" id="2.1.2.1"/>
    </reaction>
</comment>
<comment type="cofactor">
    <cofactor evidence="1">
        <name>pyridoxal 5'-phosphate</name>
        <dbReference type="ChEBI" id="CHEBI:597326"/>
    </cofactor>
</comment>
<comment type="pathway">
    <text evidence="1">One-carbon metabolism; tetrahydrofolate interconversion.</text>
</comment>
<comment type="pathway">
    <text evidence="1">Amino-acid biosynthesis; glycine biosynthesis; glycine from L-serine: step 1/1.</text>
</comment>
<comment type="subunit">
    <text evidence="1">Homodimer.</text>
</comment>
<comment type="subcellular location">
    <subcellularLocation>
        <location evidence="1">Cytoplasm</location>
    </subcellularLocation>
</comment>
<comment type="similarity">
    <text evidence="1">Belongs to the SHMT family.</text>
</comment>
<protein>
    <recommendedName>
        <fullName evidence="1">Serine hydroxymethyltransferase</fullName>
        <shortName evidence="1">SHMT</shortName>
        <shortName evidence="1">Serine methylase</shortName>
        <ecNumber evidence="1">2.1.2.1</ecNumber>
    </recommendedName>
</protein>
<dbReference type="EC" id="2.1.2.1" evidence="1"/>
<dbReference type="EMBL" id="CP001390">
    <property type="protein sequence ID" value="ACM20968.1"/>
    <property type="molecule type" value="Genomic_DNA"/>
</dbReference>
<dbReference type="RefSeq" id="WP_012647697.1">
    <property type="nucleotide sequence ID" value="NC_011979.1"/>
</dbReference>
<dbReference type="SMR" id="B9M0W5"/>
<dbReference type="STRING" id="316067.Geob_2618"/>
<dbReference type="KEGG" id="geo:Geob_2618"/>
<dbReference type="eggNOG" id="COG0112">
    <property type="taxonomic scope" value="Bacteria"/>
</dbReference>
<dbReference type="HOGENOM" id="CLU_022477_2_1_7"/>
<dbReference type="OrthoDB" id="9803846at2"/>
<dbReference type="UniPathway" id="UPA00193"/>
<dbReference type="UniPathway" id="UPA00288">
    <property type="reaction ID" value="UER01023"/>
</dbReference>
<dbReference type="Proteomes" id="UP000007721">
    <property type="component" value="Chromosome"/>
</dbReference>
<dbReference type="GO" id="GO:0005829">
    <property type="term" value="C:cytosol"/>
    <property type="evidence" value="ECO:0007669"/>
    <property type="project" value="TreeGrafter"/>
</dbReference>
<dbReference type="GO" id="GO:0004372">
    <property type="term" value="F:glycine hydroxymethyltransferase activity"/>
    <property type="evidence" value="ECO:0007669"/>
    <property type="project" value="UniProtKB-UniRule"/>
</dbReference>
<dbReference type="GO" id="GO:0030170">
    <property type="term" value="F:pyridoxal phosphate binding"/>
    <property type="evidence" value="ECO:0007669"/>
    <property type="project" value="UniProtKB-UniRule"/>
</dbReference>
<dbReference type="GO" id="GO:0019264">
    <property type="term" value="P:glycine biosynthetic process from serine"/>
    <property type="evidence" value="ECO:0007669"/>
    <property type="project" value="UniProtKB-UniRule"/>
</dbReference>
<dbReference type="GO" id="GO:0035999">
    <property type="term" value="P:tetrahydrofolate interconversion"/>
    <property type="evidence" value="ECO:0007669"/>
    <property type="project" value="UniProtKB-UniRule"/>
</dbReference>
<dbReference type="CDD" id="cd00378">
    <property type="entry name" value="SHMT"/>
    <property type="match status" value="1"/>
</dbReference>
<dbReference type="FunFam" id="3.40.640.10:FF:000001">
    <property type="entry name" value="Serine hydroxymethyltransferase"/>
    <property type="match status" value="1"/>
</dbReference>
<dbReference type="FunFam" id="3.90.1150.10:FF:000003">
    <property type="entry name" value="Serine hydroxymethyltransferase"/>
    <property type="match status" value="1"/>
</dbReference>
<dbReference type="Gene3D" id="3.90.1150.10">
    <property type="entry name" value="Aspartate Aminotransferase, domain 1"/>
    <property type="match status" value="1"/>
</dbReference>
<dbReference type="Gene3D" id="3.40.640.10">
    <property type="entry name" value="Type I PLP-dependent aspartate aminotransferase-like (Major domain)"/>
    <property type="match status" value="1"/>
</dbReference>
<dbReference type="HAMAP" id="MF_00051">
    <property type="entry name" value="SHMT"/>
    <property type="match status" value="1"/>
</dbReference>
<dbReference type="InterPro" id="IPR015424">
    <property type="entry name" value="PyrdxlP-dep_Trfase"/>
</dbReference>
<dbReference type="InterPro" id="IPR015421">
    <property type="entry name" value="PyrdxlP-dep_Trfase_major"/>
</dbReference>
<dbReference type="InterPro" id="IPR015422">
    <property type="entry name" value="PyrdxlP-dep_Trfase_small"/>
</dbReference>
<dbReference type="InterPro" id="IPR001085">
    <property type="entry name" value="Ser_HO-MeTrfase"/>
</dbReference>
<dbReference type="InterPro" id="IPR049943">
    <property type="entry name" value="Ser_HO-MeTrfase-like"/>
</dbReference>
<dbReference type="InterPro" id="IPR019798">
    <property type="entry name" value="Ser_HO-MeTrfase_PLP_BS"/>
</dbReference>
<dbReference type="InterPro" id="IPR039429">
    <property type="entry name" value="SHMT-like_dom"/>
</dbReference>
<dbReference type="NCBIfam" id="NF000586">
    <property type="entry name" value="PRK00011.1"/>
    <property type="match status" value="1"/>
</dbReference>
<dbReference type="PANTHER" id="PTHR11680">
    <property type="entry name" value="SERINE HYDROXYMETHYLTRANSFERASE"/>
    <property type="match status" value="1"/>
</dbReference>
<dbReference type="PANTHER" id="PTHR11680:SF50">
    <property type="entry name" value="SERINE HYDROXYMETHYLTRANSFERASE"/>
    <property type="match status" value="1"/>
</dbReference>
<dbReference type="Pfam" id="PF00464">
    <property type="entry name" value="SHMT"/>
    <property type="match status" value="1"/>
</dbReference>
<dbReference type="PIRSF" id="PIRSF000412">
    <property type="entry name" value="SHMT"/>
    <property type="match status" value="1"/>
</dbReference>
<dbReference type="SUPFAM" id="SSF53383">
    <property type="entry name" value="PLP-dependent transferases"/>
    <property type="match status" value="1"/>
</dbReference>
<dbReference type="PROSITE" id="PS00096">
    <property type="entry name" value="SHMT"/>
    <property type="match status" value="1"/>
</dbReference>
<name>GLYA_GEODF</name>
<accession>B9M0W5</accession>
<gene>
    <name evidence="1" type="primary">glyA</name>
    <name type="ordered locus">Geob_2618</name>
</gene>
<reference key="1">
    <citation type="submission" date="2009-01" db="EMBL/GenBank/DDBJ databases">
        <title>Complete sequence of Geobacter sp. FRC-32.</title>
        <authorList>
            <consortium name="US DOE Joint Genome Institute"/>
            <person name="Lucas S."/>
            <person name="Copeland A."/>
            <person name="Lapidus A."/>
            <person name="Glavina del Rio T."/>
            <person name="Dalin E."/>
            <person name="Tice H."/>
            <person name="Bruce D."/>
            <person name="Goodwin L."/>
            <person name="Pitluck S."/>
            <person name="Saunders E."/>
            <person name="Brettin T."/>
            <person name="Detter J.C."/>
            <person name="Han C."/>
            <person name="Larimer F."/>
            <person name="Land M."/>
            <person name="Hauser L."/>
            <person name="Kyrpides N."/>
            <person name="Ovchinnikova G."/>
            <person name="Kostka J."/>
            <person name="Richardson P."/>
        </authorList>
    </citation>
    <scope>NUCLEOTIDE SEQUENCE [LARGE SCALE GENOMIC DNA]</scope>
    <source>
        <strain>DSM 22248 / JCM 15807 / FRC-32</strain>
    </source>
</reference>
<organism>
    <name type="scientific">Geotalea daltonii (strain DSM 22248 / JCM 15807 / FRC-32)</name>
    <name type="common">Geobacter daltonii</name>
    <dbReference type="NCBI Taxonomy" id="316067"/>
    <lineage>
        <taxon>Bacteria</taxon>
        <taxon>Pseudomonadati</taxon>
        <taxon>Thermodesulfobacteriota</taxon>
        <taxon>Desulfuromonadia</taxon>
        <taxon>Geobacterales</taxon>
        <taxon>Geobacteraceae</taxon>
        <taxon>Geotalea</taxon>
    </lineage>
</organism>
<sequence length="415" mass="44667">MSILENFDPAVAHAIRVETERQEFNLELIASENFVSEAVMEAQGSVLTNKYAEGYPGKRYYGGCHNVDIVENLAIDRAKELFGAEHANVQPHSGSQANMAVYFTVLKPGDTVLGMNLAHGGHLTHGSPVNFSGKFFNIVPYGVTKESQTIDYAEVERLAVEHKPKMIVVGASAYPRTIDFAAFRKIADKVGAVVMVDMAHIAGLVAAGLHPSPVPHAEFVTTTTHKTLRGPRGGMILCREEFAKALNSNIFPGIQGGPLMHVIAAKAVAFKEALSPEFKQYQQQIVNNAKALAVALMKNGFKLTSGGTDNHLMLVDLSETPLTGKVAEEALDKAGITVNKNGIPFDTRSPFITSGIRIGTPAATTHGLKEPEMAQVAGFIADALANVDNDAKLAEIKGRVNTMMKQFPLYSSRLA</sequence>
<keyword id="KW-0028">Amino-acid biosynthesis</keyword>
<keyword id="KW-0963">Cytoplasm</keyword>
<keyword id="KW-0554">One-carbon metabolism</keyword>
<keyword id="KW-0663">Pyridoxal phosphate</keyword>
<keyword id="KW-1185">Reference proteome</keyword>
<keyword id="KW-0808">Transferase</keyword>
<evidence type="ECO:0000255" key="1">
    <source>
        <dbReference type="HAMAP-Rule" id="MF_00051"/>
    </source>
</evidence>